<accession>Q2IFP4</accession>
<proteinExistence type="inferred from homology"/>
<reference key="1">
    <citation type="submission" date="2006-01" db="EMBL/GenBank/DDBJ databases">
        <title>Complete sequence of Anaeromyxobacter dehalogenans 2CP-C.</title>
        <authorList>
            <person name="Copeland A."/>
            <person name="Lucas S."/>
            <person name="Lapidus A."/>
            <person name="Barry K."/>
            <person name="Detter J.C."/>
            <person name="Glavina T."/>
            <person name="Hammon N."/>
            <person name="Israni S."/>
            <person name="Pitluck S."/>
            <person name="Brettin T."/>
            <person name="Bruce D."/>
            <person name="Han C."/>
            <person name="Tapia R."/>
            <person name="Gilna P."/>
            <person name="Kiss H."/>
            <person name="Schmutz J."/>
            <person name="Larimer F."/>
            <person name="Land M."/>
            <person name="Kyrpides N."/>
            <person name="Anderson I."/>
            <person name="Sanford R.A."/>
            <person name="Ritalahti K.M."/>
            <person name="Thomas H.S."/>
            <person name="Kirby J.R."/>
            <person name="Zhulin I.B."/>
            <person name="Loeffler F.E."/>
            <person name="Richardson P."/>
        </authorList>
    </citation>
    <scope>NUCLEOTIDE SEQUENCE [LARGE SCALE GENOMIC DNA]</scope>
    <source>
        <strain>2CP-C</strain>
    </source>
</reference>
<evidence type="ECO:0000255" key="1">
    <source>
        <dbReference type="HAMAP-Rule" id="MF_00017"/>
    </source>
</evidence>
<feature type="chain" id="PRO_0000322857" description="Recombination protein RecR">
    <location>
        <begin position="1"/>
        <end position="198"/>
    </location>
</feature>
<feature type="domain" description="Toprim" evidence="1">
    <location>
        <begin position="80"/>
        <end position="175"/>
    </location>
</feature>
<feature type="zinc finger region" description="C4-type" evidence="1">
    <location>
        <begin position="57"/>
        <end position="72"/>
    </location>
</feature>
<name>RECR_ANADE</name>
<sequence length="198" mass="21312">MAVADPIARLVKELAKLPGIGEKTAQRLAFHILKAGAGYAGDLAAAIAGVVRDVRLCSTCQTLTDQDPCAICRDPERDARMICVVEGVPDLLAVERTHEFRGRYHVLHGALSPLDGVGPSDLKIRELLVRLEREPADEIVVATNPDVEGEATALYLTKLLKPMGLKVTRIAQGVPMGGDLEYADQVTLARALAGRREL</sequence>
<comment type="function">
    <text evidence="1">May play a role in DNA repair. It seems to be involved in an RecBC-independent recombinational process of DNA repair. It may act with RecF and RecO.</text>
</comment>
<comment type="similarity">
    <text evidence="1">Belongs to the RecR family.</text>
</comment>
<keyword id="KW-0227">DNA damage</keyword>
<keyword id="KW-0233">DNA recombination</keyword>
<keyword id="KW-0234">DNA repair</keyword>
<keyword id="KW-0479">Metal-binding</keyword>
<keyword id="KW-1185">Reference proteome</keyword>
<keyword id="KW-0862">Zinc</keyword>
<keyword id="KW-0863">Zinc-finger</keyword>
<gene>
    <name evidence="1" type="primary">recR</name>
    <name type="ordered locus">Adeh_3635</name>
</gene>
<organism>
    <name type="scientific">Anaeromyxobacter dehalogenans (strain 2CP-C)</name>
    <dbReference type="NCBI Taxonomy" id="290397"/>
    <lineage>
        <taxon>Bacteria</taxon>
        <taxon>Pseudomonadati</taxon>
        <taxon>Myxococcota</taxon>
        <taxon>Myxococcia</taxon>
        <taxon>Myxococcales</taxon>
        <taxon>Cystobacterineae</taxon>
        <taxon>Anaeromyxobacteraceae</taxon>
        <taxon>Anaeromyxobacter</taxon>
    </lineage>
</organism>
<dbReference type="EMBL" id="CP000251">
    <property type="protein sequence ID" value="ABC83401.1"/>
    <property type="molecule type" value="Genomic_DNA"/>
</dbReference>
<dbReference type="RefSeq" id="WP_011422683.1">
    <property type="nucleotide sequence ID" value="NC_007760.1"/>
</dbReference>
<dbReference type="SMR" id="Q2IFP4"/>
<dbReference type="STRING" id="290397.Adeh_3635"/>
<dbReference type="KEGG" id="ade:Adeh_3635"/>
<dbReference type="eggNOG" id="COG0353">
    <property type="taxonomic scope" value="Bacteria"/>
</dbReference>
<dbReference type="HOGENOM" id="CLU_060739_1_0_7"/>
<dbReference type="OrthoDB" id="9802672at2"/>
<dbReference type="Proteomes" id="UP000001935">
    <property type="component" value="Chromosome"/>
</dbReference>
<dbReference type="GO" id="GO:0003677">
    <property type="term" value="F:DNA binding"/>
    <property type="evidence" value="ECO:0007669"/>
    <property type="project" value="UniProtKB-UniRule"/>
</dbReference>
<dbReference type="GO" id="GO:0008270">
    <property type="term" value="F:zinc ion binding"/>
    <property type="evidence" value="ECO:0007669"/>
    <property type="project" value="UniProtKB-KW"/>
</dbReference>
<dbReference type="GO" id="GO:0006310">
    <property type="term" value="P:DNA recombination"/>
    <property type="evidence" value="ECO:0007669"/>
    <property type="project" value="UniProtKB-UniRule"/>
</dbReference>
<dbReference type="GO" id="GO:0006281">
    <property type="term" value="P:DNA repair"/>
    <property type="evidence" value="ECO:0007669"/>
    <property type="project" value="UniProtKB-UniRule"/>
</dbReference>
<dbReference type="CDD" id="cd01025">
    <property type="entry name" value="TOPRIM_recR"/>
    <property type="match status" value="1"/>
</dbReference>
<dbReference type="Gene3D" id="3.30.60.80">
    <property type="match status" value="1"/>
</dbReference>
<dbReference type="Gene3D" id="3.40.1360.10">
    <property type="match status" value="1"/>
</dbReference>
<dbReference type="Gene3D" id="6.10.250.240">
    <property type="match status" value="1"/>
</dbReference>
<dbReference type="Gene3D" id="1.10.8.420">
    <property type="entry name" value="RecR Domain 1"/>
    <property type="match status" value="1"/>
</dbReference>
<dbReference type="HAMAP" id="MF_00017">
    <property type="entry name" value="RecR"/>
    <property type="match status" value="1"/>
</dbReference>
<dbReference type="InterPro" id="IPR000093">
    <property type="entry name" value="DNA_Rcmb_RecR"/>
</dbReference>
<dbReference type="InterPro" id="IPR003583">
    <property type="entry name" value="Hlx-hairpin-Hlx_DNA-bd_motif"/>
</dbReference>
<dbReference type="InterPro" id="IPR023627">
    <property type="entry name" value="Rcmb_RecR"/>
</dbReference>
<dbReference type="InterPro" id="IPR015967">
    <property type="entry name" value="Rcmb_RecR_Znf"/>
</dbReference>
<dbReference type="InterPro" id="IPR006171">
    <property type="entry name" value="TOPRIM_dom"/>
</dbReference>
<dbReference type="InterPro" id="IPR034137">
    <property type="entry name" value="TOPRIM_RecR"/>
</dbReference>
<dbReference type="NCBIfam" id="TIGR00615">
    <property type="entry name" value="recR"/>
    <property type="match status" value="1"/>
</dbReference>
<dbReference type="PANTHER" id="PTHR30446">
    <property type="entry name" value="RECOMBINATION PROTEIN RECR"/>
    <property type="match status" value="1"/>
</dbReference>
<dbReference type="PANTHER" id="PTHR30446:SF0">
    <property type="entry name" value="RECOMBINATION PROTEIN RECR"/>
    <property type="match status" value="1"/>
</dbReference>
<dbReference type="Pfam" id="PF21175">
    <property type="entry name" value="RecR_C"/>
    <property type="match status" value="1"/>
</dbReference>
<dbReference type="Pfam" id="PF21176">
    <property type="entry name" value="RecR_HhH"/>
    <property type="match status" value="1"/>
</dbReference>
<dbReference type="Pfam" id="PF02132">
    <property type="entry name" value="RecR_ZnF"/>
    <property type="match status" value="1"/>
</dbReference>
<dbReference type="Pfam" id="PF13662">
    <property type="entry name" value="Toprim_4"/>
    <property type="match status" value="1"/>
</dbReference>
<dbReference type="SMART" id="SM00278">
    <property type="entry name" value="HhH1"/>
    <property type="match status" value="1"/>
</dbReference>
<dbReference type="SMART" id="SM00493">
    <property type="entry name" value="TOPRIM"/>
    <property type="match status" value="1"/>
</dbReference>
<dbReference type="SUPFAM" id="SSF111304">
    <property type="entry name" value="Recombination protein RecR"/>
    <property type="match status" value="1"/>
</dbReference>
<dbReference type="PROSITE" id="PS01300">
    <property type="entry name" value="RECR"/>
    <property type="match status" value="1"/>
</dbReference>
<dbReference type="PROSITE" id="PS50880">
    <property type="entry name" value="TOPRIM"/>
    <property type="match status" value="1"/>
</dbReference>
<protein>
    <recommendedName>
        <fullName evidence="1">Recombination protein RecR</fullName>
    </recommendedName>
</protein>